<sequence length="253" mass="27831">MHLKEILAQFSFFTAIPVKSSASLEEIAESSYISPIIVGISLGLIESVAYLILYRILGELTGIVLLGIIELLRGFNHLDGLLDLGDALMIRGNREKKIKALKDVEVGSGGIGLLLVYLSIQIVALLKLDFSLYTIFYLISSNVLSMSLSLYILSTISPIPESNLGRIFHDKLKGKSTILLLELIPFISLYNVIVFIIFYMIMYKICGSLGGSSGDIAGASITLSFPLFLITDEITNLNYSLLSILCYLFSHLH</sequence>
<comment type="function">
    <text evidence="1">Joins adenosylcobinamide-GDP and alpha-ribazole to generate adenosylcobalamin (Ado-cobalamin). Also synthesizes adenosylcobalamin 5'-phosphate from adenosylcobinamide-GDP and alpha-ribazole 5'-phosphate.</text>
</comment>
<comment type="catalytic activity">
    <reaction evidence="1">
        <text>alpha-ribazole + adenosylcob(III)inamide-GDP = adenosylcob(III)alamin + GMP + H(+)</text>
        <dbReference type="Rhea" id="RHEA:16049"/>
        <dbReference type="ChEBI" id="CHEBI:10329"/>
        <dbReference type="ChEBI" id="CHEBI:15378"/>
        <dbReference type="ChEBI" id="CHEBI:18408"/>
        <dbReference type="ChEBI" id="CHEBI:58115"/>
        <dbReference type="ChEBI" id="CHEBI:60487"/>
        <dbReference type="EC" id="2.7.8.26"/>
    </reaction>
</comment>
<comment type="catalytic activity">
    <reaction evidence="1">
        <text>alpha-ribazole 5'-phosphate + adenosylcob(III)inamide-GDP = adenosylcob(III)alamin 5'-phosphate + GMP + H(+)</text>
        <dbReference type="Rhea" id="RHEA:23560"/>
        <dbReference type="ChEBI" id="CHEBI:15378"/>
        <dbReference type="ChEBI" id="CHEBI:57918"/>
        <dbReference type="ChEBI" id="CHEBI:58115"/>
        <dbReference type="ChEBI" id="CHEBI:60487"/>
        <dbReference type="ChEBI" id="CHEBI:60493"/>
        <dbReference type="EC" id="2.7.8.26"/>
    </reaction>
</comment>
<comment type="cofactor">
    <cofactor evidence="1">
        <name>Mg(2+)</name>
        <dbReference type="ChEBI" id="CHEBI:18420"/>
    </cofactor>
</comment>
<comment type="pathway">
    <text evidence="1">Cofactor biosynthesis; adenosylcobalamin biosynthesis; adenosylcobalamin from cob(II)yrinate a,c-diamide: step 7/7.</text>
</comment>
<comment type="subcellular location">
    <subcellularLocation>
        <location evidence="1">Cell membrane</location>
        <topology evidence="1">Multi-pass membrane protein</topology>
    </subcellularLocation>
</comment>
<comment type="similarity">
    <text evidence="1">Belongs to the CobS family.</text>
</comment>
<gene>
    <name evidence="1" type="primary">cobS</name>
    <name type="ordered locus">SSO3234</name>
</gene>
<evidence type="ECO:0000255" key="1">
    <source>
        <dbReference type="HAMAP-Rule" id="MF_00719"/>
    </source>
</evidence>
<keyword id="KW-1003">Cell membrane</keyword>
<keyword id="KW-0169">Cobalamin biosynthesis</keyword>
<keyword id="KW-0460">Magnesium</keyword>
<keyword id="KW-0472">Membrane</keyword>
<keyword id="KW-1185">Reference proteome</keyword>
<keyword id="KW-0808">Transferase</keyword>
<keyword id="KW-0812">Transmembrane</keyword>
<keyword id="KW-1133">Transmembrane helix</keyword>
<reference key="1">
    <citation type="journal article" date="2001" name="Proc. Natl. Acad. Sci. U.S.A.">
        <title>The complete genome of the crenarchaeon Sulfolobus solfataricus P2.</title>
        <authorList>
            <person name="She Q."/>
            <person name="Singh R.K."/>
            <person name="Confalonieri F."/>
            <person name="Zivanovic Y."/>
            <person name="Allard G."/>
            <person name="Awayez M.J."/>
            <person name="Chan-Weiher C.C.-Y."/>
            <person name="Clausen I.G."/>
            <person name="Curtis B.A."/>
            <person name="De Moors A."/>
            <person name="Erauso G."/>
            <person name="Fletcher C."/>
            <person name="Gordon P.M.K."/>
            <person name="Heikamp-de Jong I."/>
            <person name="Jeffries A.C."/>
            <person name="Kozera C.J."/>
            <person name="Medina N."/>
            <person name="Peng X."/>
            <person name="Thi-Ngoc H.P."/>
            <person name="Redder P."/>
            <person name="Schenk M.E."/>
            <person name="Theriault C."/>
            <person name="Tolstrup N."/>
            <person name="Charlebois R.L."/>
            <person name="Doolittle W.F."/>
            <person name="Duguet M."/>
            <person name="Gaasterland T."/>
            <person name="Garrett R.A."/>
            <person name="Ragan M.A."/>
            <person name="Sensen C.W."/>
            <person name="Van der Oost J."/>
        </authorList>
    </citation>
    <scope>NUCLEOTIDE SEQUENCE [LARGE SCALE GENOMIC DNA]</scope>
    <source>
        <strain>ATCC 35092 / DSM 1617 / JCM 11322 / P2</strain>
    </source>
</reference>
<organism>
    <name type="scientific">Saccharolobus solfataricus (strain ATCC 35092 / DSM 1617 / JCM 11322 / P2)</name>
    <name type="common">Sulfolobus solfataricus</name>
    <dbReference type="NCBI Taxonomy" id="273057"/>
    <lineage>
        <taxon>Archaea</taxon>
        <taxon>Thermoproteota</taxon>
        <taxon>Thermoprotei</taxon>
        <taxon>Sulfolobales</taxon>
        <taxon>Sulfolobaceae</taxon>
        <taxon>Saccharolobus</taxon>
    </lineage>
</organism>
<proteinExistence type="inferred from homology"/>
<protein>
    <recommendedName>
        <fullName evidence="1">Adenosylcobinamide-GDP ribazoletransferase</fullName>
        <ecNumber evidence="1">2.7.8.26</ecNumber>
    </recommendedName>
    <alternativeName>
        <fullName evidence="1">Cobalamin synthase</fullName>
    </alternativeName>
    <alternativeName>
        <fullName evidence="1">Cobalamin-5'-phosphate synthase</fullName>
    </alternativeName>
</protein>
<feature type="chain" id="PRO_0000146921" description="Adenosylcobinamide-GDP ribazoletransferase">
    <location>
        <begin position="1"/>
        <end position="253"/>
    </location>
</feature>
<feature type="transmembrane region" description="Helical" evidence="1">
    <location>
        <begin position="33"/>
        <end position="53"/>
    </location>
</feature>
<feature type="transmembrane region" description="Helical" evidence="1">
    <location>
        <begin position="106"/>
        <end position="126"/>
    </location>
</feature>
<feature type="transmembrane region" description="Helical" evidence="1">
    <location>
        <begin position="132"/>
        <end position="152"/>
    </location>
</feature>
<feature type="transmembrane region" description="Helical" evidence="1">
    <location>
        <begin position="178"/>
        <end position="198"/>
    </location>
</feature>
<accession>Q97TZ6</accession>
<name>COBS_SACS2</name>
<dbReference type="EC" id="2.7.8.26" evidence="1"/>
<dbReference type="EMBL" id="AE006641">
    <property type="protein sequence ID" value="AAK43328.1"/>
    <property type="molecule type" value="Genomic_DNA"/>
</dbReference>
<dbReference type="PIR" id="A90509">
    <property type="entry name" value="A90509"/>
</dbReference>
<dbReference type="RefSeq" id="WP_009989675.1">
    <property type="nucleotide sequence ID" value="NC_002754.1"/>
</dbReference>
<dbReference type="FunCoup" id="Q97TZ6">
    <property type="interactions" value="98"/>
</dbReference>
<dbReference type="STRING" id="273057.SSO3234"/>
<dbReference type="PaxDb" id="273057-SSO3234"/>
<dbReference type="DNASU" id="1453247"/>
<dbReference type="EnsemblBacteria" id="AAK43328">
    <property type="protein sequence ID" value="AAK43328"/>
    <property type="gene ID" value="SSO3234"/>
</dbReference>
<dbReference type="GeneID" id="44128947"/>
<dbReference type="KEGG" id="sso:SSO3234"/>
<dbReference type="PATRIC" id="fig|273057.12.peg.3336"/>
<dbReference type="eggNOG" id="arCOG04338">
    <property type="taxonomic scope" value="Archaea"/>
</dbReference>
<dbReference type="HOGENOM" id="CLU_057426_2_0_2"/>
<dbReference type="InParanoid" id="Q97TZ6"/>
<dbReference type="PhylomeDB" id="Q97TZ6"/>
<dbReference type="UniPathway" id="UPA00148">
    <property type="reaction ID" value="UER00238"/>
</dbReference>
<dbReference type="Proteomes" id="UP000001974">
    <property type="component" value="Chromosome"/>
</dbReference>
<dbReference type="GO" id="GO:0005886">
    <property type="term" value="C:plasma membrane"/>
    <property type="evidence" value="ECO:0007669"/>
    <property type="project" value="UniProtKB-SubCell"/>
</dbReference>
<dbReference type="GO" id="GO:0051073">
    <property type="term" value="F:adenosylcobinamide-GDP ribazoletransferase activity"/>
    <property type="evidence" value="ECO:0007669"/>
    <property type="project" value="UniProtKB-UniRule"/>
</dbReference>
<dbReference type="GO" id="GO:0008818">
    <property type="term" value="F:cobalamin 5'-phosphate synthase activity"/>
    <property type="evidence" value="ECO:0007669"/>
    <property type="project" value="UniProtKB-UniRule"/>
</dbReference>
<dbReference type="GO" id="GO:0009236">
    <property type="term" value="P:cobalamin biosynthetic process"/>
    <property type="evidence" value="ECO:0000318"/>
    <property type="project" value="GO_Central"/>
</dbReference>
<dbReference type="HAMAP" id="MF_00719">
    <property type="entry name" value="CobS"/>
    <property type="match status" value="1"/>
</dbReference>
<dbReference type="InterPro" id="IPR003805">
    <property type="entry name" value="CobS"/>
</dbReference>
<dbReference type="NCBIfam" id="TIGR00317">
    <property type="entry name" value="cobS"/>
    <property type="match status" value="1"/>
</dbReference>
<dbReference type="PANTHER" id="PTHR34148">
    <property type="entry name" value="ADENOSYLCOBINAMIDE-GDP RIBAZOLETRANSFERASE"/>
    <property type="match status" value="1"/>
</dbReference>
<dbReference type="PANTHER" id="PTHR34148:SF1">
    <property type="entry name" value="ADENOSYLCOBINAMIDE-GDP RIBAZOLETRANSFERASE"/>
    <property type="match status" value="1"/>
</dbReference>
<dbReference type="Pfam" id="PF02654">
    <property type="entry name" value="CobS"/>
    <property type="match status" value="1"/>
</dbReference>